<proteinExistence type="inferred from homology"/>
<organism>
    <name type="scientific">Chlorocebus sabaeus</name>
    <name type="common">Green monkey</name>
    <name type="synonym">Simia sabaea</name>
    <dbReference type="NCBI Taxonomy" id="60711"/>
    <lineage>
        <taxon>Eukaryota</taxon>
        <taxon>Metazoa</taxon>
        <taxon>Chordata</taxon>
        <taxon>Craniata</taxon>
        <taxon>Vertebrata</taxon>
        <taxon>Euteleostomi</taxon>
        <taxon>Mammalia</taxon>
        <taxon>Eutheria</taxon>
        <taxon>Euarchontoglires</taxon>
        <taxon>Primates</taxon>
        <taxon>Haplorrhini</taxon>
        <taxon>Catarrhini</taxon>
        <taxon>Cercopithecidae</taxon>
        <taxon>Cercopithecinae</taxon>
        <taxon>Chlorocebus</taxon>
    </lineage>
</organism>
<evidence type="ECO:0000250" key="1">
    <source>
        <dbReference type="UniProtKB" id="P02652"/>
    </source>
</evidence>
<evidence type="ECO:0000250" key="2">
    <source>
        <dbReference type="UniProtKB" id="P18656"/>
    </source>
</evidence>
<evidence type="ECO:0000255" key="3"/>
<evidence type="ECO:0000305" key="4"/>
<gene>
    <name type="primary">APOA2</name>
</gene>
<sequence length="100" mass="11200">MKLLAATVLLLTVCSLEGALVRRQAEEPSVESLVSQYFQTVTDYGKDLMEKVKSPELQAQAKAYFEKSKEQLTPLVKKAGTDLVNFLSYFVELRTQPATQ</sequence>
<comment type="function">
    <text evidence="2">May stabilize HDL (high density lipoprotein) structure by its association with lipids, and affect the HDL metabolism.</text>
</comment>
<comment type="subunit">
    <text evidence="1">Monomer. Interacts with NAXE and NDRG1.</text>
</comment>
<comment type="subcellular location">
    <subcellularLocation>
        <location evidence="1">Secreted</location>
    </subcellularLocation>
</comment>
<comment type="similarity">
    <text evidence="4">Belongs to the apolipoprotein A2 family.</text>
</comment>
<accession>P0DP84</accession>
<feature type="signal peptide" evidence="3">
    <location>
        <begin position="1"/>
        <end position="18"/>
    </location>
</feature>
<feature type="chain" id="PRO_0000441382" description="Proapolipoprotein A-II" evidence="2">
    <location>
        <begin position="19"/>
        <end position="100"/>
    </location>
</feature>
<feature type="chain" id="PRO_0000441383" description="Apolipoprotein A-II" evidence="1">
    <location>
        <begin position="24"/>
        <end position="100"/>
    </location>
</feature>
<feature type="chain" id="PRO_0000441384" description="Truncated apolipoprotein A-II" evidence="1">
    <location>
        <begin position="24"/>
        <end position="99"/>
    </location>
</feature>
<feature type="modified residue" description="Methionine sulfoxide" evidence="1">
    <location>
        <position position="49"/>
    </location>
</feature>
<feature type="modified residue" description="Phosphoserine" evidence="1">
    <location>
        <position position="54"/>
    </location>
</feature>
<feature type="modified residue" description="Phosphoserine" evidence="1">
    <location>
        <position position="68"/>
    </location>
</feature>
<protein>
    <recommendedName>
        <fullName>Apolipoprotein A-II</fullName>
        <shortName>Apo-AII</shortName>
        <shortName>ApoA-II</shortName>
    </recommendedName>
    <alternativeName>
        <fullName>Apolipoprotein A2</fullName>
    </alternativeName>
    <component>
        <recommendedName>
            <fullName>Proapolipoprotein A-II</fullName>
            <shortName>ProapoA-II</shortName>
        </recommendedName>
    </component>
    <component>
        <recommendedName>
            <fullName>Truncated apolipoprotein A-II</fullName>
        </recommendedName>
    </component>
</protein>
<keyword id="KW-0165">Cleavage on pair of basic residues</keyword>
<keyword id="KW-0345">HDL</keyword>
<keyword id="KW-0445">Lipid transport</keyword>
<keyword id="KW-0558">Oxidation</keyword>
<keyword id="KW-0597">Phosphoprotein</keyword>
<keyword id="KW-1185">Reference proteome</keyword>
<keyword id="KW-0964">Secreted</keyword>
<keyword id="KW-0732">Signal</keyword>
<keyword id="KW-0813">Transport</keyword>
<reference key="1">
    <citation type="submission" date="2014-03" db="EMBL/GenBank/DDBJ databases">
        <authorList>
            <person name="Warren W."/>
            <person name="Wilson R.K."/>
        </authorList>
    </citation>
    <scope>NUCLEOTIDE SEQUENCE [LARGE SCALE GENOMIC DNA]</scope>
</reference>
<reference key="2">
    <citation type="unpublished observations" date="2017-06">
        <authorList>
            <person name="Puppione D.L."/>
        </authorList>
    </citation>
    <scope>IDENTIFICATION</scope>
</reference>
<dbReference type="EMBL" id="AQIB01138703">
    <property type="status" value="NOT_ANNOTATED_CDS"/>
    <property type="molecule type" value="Genomic_DNA"/>
</dbReference>
<dbReference type="RefSeq" id="XP_007974599.1">
    <property type="nucleotide sequence ID" value="XM_007976408.2"/>
</dbReference>
<dbReference type="SMR" id="P0DP84"/>
<dbReference type="STRING" id="60711.ENSCSAP00000015372"/>
<dbReference type="Ensembl" id="ENSCSAT00000000691.1">
    <property type="protein sequence ID" value="ENSCSAP00000015372.1"/>
    <property type="gene ID" value="ENSCSAG00000002673.1"/>
</dbReference>
<dbReference type="GeneID" id="103223686"/>
<dbReference type="KEGG" id="csab:103223686"/>
<dbReference type="CTD" id="336"/>
<dbReference type="eggNOG" id="ENOG502SVYZ">
    <property type="taxonomic scope" value="Eukaryota"/>
</dbReference>
<dbReference type="GeneTree" id="ENSGT00390000003306"/>
<dbReference type="OMA" id="LTICSFE"/>
<dbReference type="OrthoDB" id="6865at314294"/>
<dbReference type="BioGRID-ORCS" id="103223686">
    <property type="hits" value="0 hits in 9 CRISPR screens"/>
</dbReference>
<dbReference type="Proteomes" id="UP000029965">
    <property type="component" value="Chromosome 20"/>
</dbReference>
<dbReference type="Bgee" id="ENSCSAG00000002673">
    <property type="expression patterns" value="Expressed in liver and 3 other cell types or tissues"/>
</dbReference>
<dbReference type="GO" id="GO:0042627">
    <property type="term" value="C:chylomicron"/>
    <property type="evidence" value="ECO:0007669"/>
    <property type="project" value="Ensembl"/>
</dbReference>
<dbReference type="GO" id="GO:0034366">
    <property type="term" value="C:spherical high-density lipoprotein particle"/>
    <property type="evidence" value="ECO:0007669"/>
    <property type="project" value="Ensembl"/>
</dbReference>
<dbReference type="GO" id="GO:0034361">
    <property type="term" value="C:very-low-density lipoprotein particle"/>
    <property type="evidence" value="ECO:0007669"/>
    <property type="project" value="Ensembl"/>
</dbReference>
<dbReference type="GO" id="GO:0034190">
    <property type="term" value="F:apolipoprotein receptor binding"/>
    <property type="evidence" value="ECO:0007669"/>
    <property type="project" value="Ensembl"/>
</dbReference>
<dbReference type="GO" id="GO:0015485">
    <property type="term" value="F:cholesterol binding"/>
    <property type="evidence" value="ECO:0007669"/>
    <property type="project" value="Ensembl"/>
</dbReference>
<dbReference type="GO" id="GO:0120020">
    <property type="term" value="F:cholesterol transfer activity"/>
    <property type="evidence" value="ECO:0007669"/>
    <property type="project" value="Ensembl"/>
</dbReference>
<dbReference type="GO" id="GO:0019899">
    <property type="term" value="F:enzyme binding"/>
    <property type="evidence" value="ECO:0007669"/>
    <property type="project" value="Ensembl"/>
</dbReference>
<dbReference type="GO" id="GO:0031072">
    <property type="term" value="F:heat shock protein binding"/>
    <property type="evidence" value="ECO:0007669"/>
    <property type="project" value="Ensembl"/>
</dbReference>
<dbReference type="GO" id="GO:0008035">
    <property type="term" value="F:high-density lipoprotein particle binding"/>
    <property type="evidence" value="ECO:0007669"/>
    <property type="project" value="Ensembl"/>
</dbReference>
<dbReference type="GO" id="GO:0070653">
    <property type="term" value="F:high-density lipoprotein particle receptor binding"/>
    <property type="evidence" value="ECO:0007669"/>
    <property type="project" value="Ensembl"/>
</dbReference>
<dbReference type="GO" id="GO:0055102">
    <property type="term" value="F:lipase inhibitor activity"/>
    <property type="evidence" value="ECO:0007669"/>
    <property type="project" value="Ensembl"/>
</dbReference>
<dbReference type="GO" id="GO:0031210">
    <property type="term" value="F:phosphatidylcholine binding"/>
    <property type="evidence" value="ECO:0007669"/>
    <property type="project" value="Ensembl"/>
</dbReference>
<dbReference type="GO" id="GO:0060228">
    <property type="term" value="F:phosphatidylcholine-sterol O-acyltransferase activator activity"/>
    <property type="evidence" value="ECO:0007669"/>
    <property type="project" value="Ensembl"/>
</dbReference>
<dbReference type="GO" id="GO:0046982">
    <property type="term" value="F:protein heterodimerization activity"/>
    <property type="evidence" value="ECO:0007669"/>
    <property type="project" value="Ensembl"/>
</dbReference>
<dbReference type="GO" id="GO:0042803">
    <property type="term" value="F:protein homodimerization activity"/>
    <property type="evidence" value="ECO:0007669"/>
    <property type="project" value="Ensembl"/>
</dbReference>
<dbReference type="GO" id="GO:0048018">
    <property type="term" value="F:receptor ligand activity"/>
    <property type="evidence" value="ECO:0007669"/>
    <property type="project" value="Ensembl"/>
</dbReference>
<dbReference type="GO" id="GO:0071402">
    <property type="term" value="P:cellular response to lipoprotein particle stimulus"/>
    <property type="evidence" value="ECO:0007669"/>
    <property type="project" value="Ensembl"/>
</dbReference>
<dbReference type="GO" id="GO:0033344">
    <property type="term" value="P:cholesterol efflux"/>
    <property type="evidence" value="ECO:0007669"/>
    <property type="project" value="Ensembl"/>
</dbReference>
<dbReference type="GO" id="GO:0042632">
    <property type="term" value="P:cholesterol homeostasis"/>
    <property type="evidence" value="ECO:0007669"/>
    <property type="project" value="Ensembl"/>
</dbReference>
<dbReference type="GO" id="GO:0008203">
    <property type="term" value="P:cholesterol metabolic process"/>
    <property type="evidence" value="ECO:0007669"/>
    <property type="project" value="Ensembl"/>
</dbReference>
<dbReference type="GO" id="GO:0046340">
    <property type="term" value="P:diacylglycerol catabolic process"/>
    <property type="evidence" value="ECO:0007669"/>
    <property type="project" value="Ensembl"/>
</dbReference>
<dbReference type="GO" id="GO:0034380">
    <property type="term" value="P:high-density lipoprotein particle assembly"/>
    <property type="evidence" value="ECO:0007669"/>
    <property type="project" value="Ensembl"/>
</dbReference>
<dbReference type="GO" id="GO:0034384">
    <property type="term" value="P:high-density lipoprotein particle clearance"/>
    <property type="evidence" value="ECO:0007669"/>
    <property type="project" value="Ensembl"/>
</dbReference>
<dbReference type="GO" id="GO:0034375">
    <property type="term" value="P:high-density lipoprotein particle remodeling"/>
    <property type="evidence" value="ECO:0007669"/>
    <property type="project" value="Ensembl"/>
</dbReference>
<dbReference type="GO" id="GO:0042157">
    <property type="term" value="P:lipoprotein metabolic process"/>
    <property type="evidence" value="ECO:0007669"/>
    <property type="project" value="Ensembl"/>
</dbReference>
<dbReference type="GO" id="GO:0034374">
    <property type="term" value="P:low-density lipoprotein particle remodeling"/>
    <property type="evidence" value="ECO:0007669"/>
    <property type="project" value="Ensembl"/>
</dbReference>
<dbReference type="GO" id="GO:0060621">
    <property type="term" value="P:negative regulation of cholesterol import"/>
    <property type="evidence" value="ECO:0007669"/>
    <property type="project" value="Ensembl"/>
</dbReference>
<dbReference type="GO" id="GO:0002719">
    <property type="term" value="P:negative regulation of cytokine production involved in immune response"/>
    <property type="evidence" value="ECO:0007669"/>
    <property type="project" value="Ensembl"/>
</dbReference>
<dbReference type="GO" id="GO:0050995">
    <property type="term" value="P:negative regulation of lipid catabolic process"/>
    <property type="evidence" value="ECO:0007669"/>
    <property type="project" value="Ensembl"/>
</dbReference>
<dbReference type="GO" id="GO:0010903">
    <property type="term" value="P:negative regulation of very-low-density lipoprotein particle remodeling"/>
    <property type="evidence" value="ECO:0007669"/>
    <property type="project" value="Ensembl"/>
</dbReference>
<dbReference type="GO" id="GO:0006656">
    <property type="term" value="P:phosphatidylcholine biosynthetic process"/>
    <property type="evidence" value="ECO:0007669"/>
    <property type="project" value="Ensembl"/>
</dbReference>
<dbReference type="GO" id="GO:0009395">
    <property type="term" value="P:phospholipid catabolic process"/>
    <property type="evidence" value="ECO:0007669"/>
    <property type="project" value="Ensembl"/>
</dbReference>
<dbReference type="GO" id="GO:0033700">
    <property type="term" value="P:phospholipid efflux"/>
    <property type="evidence" value="ECO:0007669"/>
    <property type="project" value="Ensembl"/>
</dbReference>
<dbReference type="GO" id="GO:0032757">
    <property type="term" value="P:positive regulation of interleukin-8 production"/>
    <property type="evidence" value="ECO:0007669"/>
    <property type="project" value="Ensembl"/>
</dbReference>
<dbReference type="GO" id="GO:0050996">
    <property type="term" value="P:positive regulation of lipid catabolic process"/>
    <property type="evidence" value="ECO:0007669"/>
    <property type="project" value="Ensembl"/>
</dbReference>
<dbReference type="GO" id="GO:0050766">
    <property type="term" value="P:positive regulation of phagocytosis"/>
    <property type="evidence" value="ECO:0000250"/>
    <property type="project" value="UniProtKB"/>
</dbReference>
<dbReference type="GO" id="GO:0050821">
    <property type="term" value="P:protein stabilization"/>
    <property type="evidence" value="ECO:0000250"/>
    <property type="project" value="UniProtKB"/>
</dbReference>
<dbReference type="GO" id="GO:0030300">
    <property type="term" value="P:regulation of intestinal cholesterol absorption"/>
    <property type="evidence" value="ECO:0007669"/>
    <property type="project" value="Ensembl"/>
</dbReference>
<dbReference type="GO" id="GO:0009749">
    <property type="term" value="P:response to glucose"/>
    <property type="evidence" value="ECO:0007669"/>
    <property type="project" value="Ensembl"/>
</dbReference>
<dbReference type="GO" id="GO:0043691">
    <property type="term" value="P:reverse cholesterol transport"/>
    <property type="evidence" value="ECO:0007669"/>
    <property type="project" value="Ensembl"/>
</dbReference>
<dbReference type="GO" id="GO:0034370">
    <property type="term" value="P:triglyceride-rich lipoprotein particle remodeling"/>
    <property type="evidence" value="ECO:0007669"/>
    <property type="project" value="Ensembl"/>
</dbReference>
<dbReference type="Gene3D" id="6.10.250.100">
    <property type="match status" value="1"/>
</dbReference>
<dbReference type="InterPro" id="IPR006801">
    <property type="entry name" value="ApoA-II"/>
</dbReference>
<dbReference type="InterPro" id="IPR036172">
    <property type="entry name" value="ApoA-II_sf"/>
</dbReference>
<dbReference type="PANTHER" id="PTHR11027">
    <property type="entry name" value="APOLIPOPROTEIN A-II"/>
    <property type="match status" value="1"/>
</dbReference>
<dbReference type="PANTHER" id="PTHR11027:SF0">
    <property type="entry name" value="APOLIPOPROTEIN A-II"/>
    <property type="match status" value="1"/>
</dbReference>
<dbReference type="Pfam" id="PF04711">
    <property type="entry name" value="ApoA-II"/>
    <property type="match status" value="1"/>
</dbReference>
<dbReference type="SUPFAM" id="SSF82936">
    <property type="entry name" value="Apolipoprotein A-II"/>
    <property type="match status" value="1"/>
</dbReference>
<name>APOA2_CHLSB</name>